<protein>
    <recommendedName>
        <fullName>CTL-like protein DDB_G0288717</fullName>
    </recommendedName>
</protein>
<accession>Q54IJ2</accession>
<dbReference type="EMBL" id="AAFI02000120">
    <property type="protein sequence ID" value="EAL63090.1"/>
    <property type="molecule type" value="Genomic_DNA"/>
</dbReference>
<dbReference type="RefSeq" id="XP_636594.1">
    <property type="nucleotide sequence ID" value="XM_631502.1"/>
</dbReference>
<dbReference type="SMR" id="Q54IJ2"/>
<dbReference type="FunCoup" id="Q54IJ2">
    <property type="interactions" value="6"/>
</dbReference>
<dbReference type="TCDB" id="2.A.92.1.9">
    <property type="family name" value="the choline transporter-like (ctl) family"/>
</dbReference>
<dbReference type="GlyGen" id="Q54IJ2">
    <property type="glycosylation" value="5 sites"/>
</dbReference>
<dbReference type="PaxDb" id="44689-DDB0188069"/>
<dbReference type="EnsemblProtists" id="EAL63090">
    <property type="protein sequence ID" value="EAL63090"/>
    <property type="gene ID" value="DDB_G0288717"/>
</dbReference>
<dbReference type="GeneID" id="8626768"/>
<dbReference type="KEGG" id="ddi:DDB_G0288717"/>
<dbReference type="dictyBase" id="DDB_G0288717"/>
<dbReference type="VEuPathDB" id="AmoebaDB:DDB_G0288717"/>
<dbReference type="eggNOG" id="KOG1362">
    <property type="taxonomic scope" value="Eukaryota"/>
</dbReference>
<dbReference type="HOGENOM" id="CLU_017181_2_1_1"/>
<dbReference type="InParanoid" id="Q54IJ2"/>
<dbReference type="OMA" id="IFVCYLE"/>
<dbReference type="PhylomeDB" id="Q54IJ2"/>
<dbReference type="Reactome" id="R-DDI-1483191">
    <property type="pathway name" value="Synthesis of PC"/>
</dbReference>
<dbReference type="Reactome" id="R-DDI-425366">
    <property type="pathway name" value="Transport of bile salts and organic acids, metal ions and amine compounds"/>
</dbReference>
<dbReference type="Reactome" id="R-DDI-6798163">
    <property type="pathway name" value="Choline catabolism"/>
</dbReference>
<dbReference type="Reactome" id="R-DDI-6798695">
    <property type="pathway name" value="Neutrophil degranulation"/>
</dbReference>
<dbReference type="PRO" id="PR:Q54IJ2"/>
<dbReference type="Proteomes" id="UP000002195">
    <property type="component" value="Chromosome 5"/>
</dbReference>
<dbReference type="GO" id="GO:0016020">
    <property type="term" value="C:membrane"/>
    <property type="evidence" value="ECO:0000318"/>
    <property type="project" value="GO_Central"/>
</dbReference>
<dbReference type="GO" id="GO:0022857">
    <property type="term" value="F:transmembrane transporter activity"/>
    <property type="evidence" value="ECO:0000318"/>
    <property type="project" value="GO_Central"/>
</dbReference>
<dbReference type="GO" id="GO:0055085">
    <property type="term" value="P:transmembrane transport"/>
    <property type="evidence" value="ECO:0000318"/>
    <property type="project" value="GO_Central"/>
</dbReference>
<dbReference type="InterPro" id="IPR007603">
    <property type="entry name" value="Choline_transptr-like"/>
</dbReference>
<dbReference type="PANTHER" id="PTHR12385">
    <property type="entry name" value="CHOLINE TRANSPORTER-LIKE (SLC FAMILY 44)"/>
    <property type="match status" value="1"/>
</dbReference>
<dbReference type="PANTHER" id="PTHR12385:SF14">
    <property type="entry name" value="CHOLINE TRANSPORTER-LIKE 2"/>
    <property type="match status" value="1"/>
</dbReference>
<dbReference type="Pfam" id="PF04515">
    <property type="entry name" value="Choline_transpo"/>
    <property type="match status" value="1"/>
</dbReference>
<reference key="1">
    <citation type="journal article" date="2005" name="Nature">
        <title>The genome of the social amoeba Dictyostelium discoideum.</title>
        <authorList>
            <person name="Eichinger L."/>
            <person name="Pachebat J.A."/>
            <person name="Gloeckner G."/>
            <person name="Rajandream M.A."/>
            <person name="Sucgang R."/>
            <person name="Berriman M."/>
            <person name="Song J."/>
            <person name="Olsen R."/>
            <person name="Szafranski K."/>
            <person name="Xu Q."/>
            <person name="Tunggal B."/>
            <person name="Kummerfeld S."/>
            <person name="Madera M."/>
            <person name="Konfortov B.A."/>
            <person name="Rivero F."/>
            <person name="Bankier A.T."/>
            <person name="Lehmann R."/>
            <person name="Hamlin N."/>
            <person name="Davies R."/>
            <person name="Gaudet P."/>
            <person name="Fey P."/>
            <person name="Pilcher K."/>
            <person name="Chen G."/>
            <person name="Saunders D."/>
            <person name="Sodergren E.J."/>
            <person name="Davis P."/>
            <person name="Kerhornou A."/>
            <person name="Nie X."/>
            <person name="Hall N."/>
            <person name="Anjard C."/>
            <person name="Hemphill L."/>
            <person name="Bason N."/>
            <person name="Farbrother P."/>
            <person name="Desany B."/>
            <person name="Just E."/>
            <person name="Morio T."/>
            <person name="Rost R."/>
            <person name="Churcher C.M."/>
            <person name="Cooper J."/>
            <person name="Haydock S."/>
            <person name="van Driessche N."/>
            <person name="Cronin A."/>
            <person name="Goodhead I."/>
            <person name="Muzny D.M."/>
            <person name="Mourier T."/>
            <person name="Pain A."/>
            <person name="Lu M."/>
            <person name="Harper D."/>
            <person name="Lindsay R."/>
            <person name="Hauser H."/>
            <person name="James K.D."/>
            <person name="Quiles M."/>
            <person name="Madan Babu M."/>
            <person name="Saito T."/>
            <person name="Buchrieser C."/>
            <person name="Wardroper A."/>
            <person name="Felder M."/>
            <person name="Thangavelu M."/>
            <person name="Johnson D."/>
            <person name="Knights A."/>
            <person name="Loulseged H."/>
            <person name="Mungall K.L."/>
            <person name="Oliver K."/>
            <person name="Price C."/>
            <person name="Quail M.A."/>
            <person name="Urushihara H."/>
            <person name="Hernandez J."/>
            <person name="Rabbinowitsch E."/>
            <person name="Steffen D."/>
            <person name="Sanders M."/>
            <person name="Ma J."/>
            <person name="Kohara Y."/>
            <person name="Sharp S."/>
            <person name="Simmonds M.N."/>
            <person name="Spiegler S."/>
            <person name="Tivey A."/>
            <person name="Sugano S."/>
            <person name="White B."/>
            <person name="Walker D."/>
            <person name="Woodward J.R."/>
            <person name="Winckler T."/>
            <person name="Tanaka Y."/>
            <person name="Shaulsky G."/>
            <person name="Schleicher M."/>
            <person name="Weinstock G.M."/>
            <person name="Rosenthal A."/>
            <person name="Cox E.C."/>
            <person name="Chisholm R.L."/>
            <person name="Gibbs R.A."/>
            <person name="Loomis W.F."/>
            <person name="Platzer M."/>
            <person name="Kay R.R."/>
            <person name="Williams J.G."/>
            <person name="Dear P.H."/>
            <person name="Noegel A.A."/>
            <person name="Barrell B.G."/>
            <person name="Kuspa A."/>
        </authorList>
    </citation>
    <scope>NUCLEOTIDE SEQUENCE [LARGE SCALE GENOMIC DNA]</scope>
    <source>
        <strain>AX4</strain>
    </source>
</reference>
<evidence type="ECO:0000250" key="1"/>
<evidence type="ECO:0000255" key="2"/>
<evidence type="ECO:0000256" key="3">
    <source>
        <dbReference type="SAM" id="MobiDB-lite"/>
    </source>
</evidence>
<evidence type="ECO:0000305" key="4"/>
<name>CTLHA_DICDI</name>
<sequence>MWAPEEDYKQPLLTNSRVANNGNNNNSNGRGGSSSPSTRLQPEHSSRKCNDILFTILFLLVIGGMAAISGIAYTKGDPSRLVPNAPNIPSIPGFNTNTTSSENPIEQYFVSHLESLVAELKRDKDILIYSVLLAIALGAAWIQLLKSFTRFFIYFTLCVGVALVATLGGLFMALGHKEGSESTMIVGGCIIICTLVLVVVIVYLRKSIDLTCAMFTETCRGVQRSPSVFVIASLVVLFFIGFIAYWTSSFIYLFSIPGSTVNPLNDHTSSEANSTDSEQEQSAFNTKIRNLMYFMIFGFFWASSFISAVFQHCVAGVVSNWYFSRDPTGKSLVGQENAYRSLGRALSTSFGSLAFGSLLIAFIEFMAFMLRVCKNSNATNKLVVMVVSCLQCILGCIESIVRWINKFGYIYVAMHGHSFCTSTKECFDLISRNMFNAVIMDFIGGLVLLLGKILGSAASALFTTALLYGMGKSLNPITIALSAIFAFCIFNLFTHIVGIGTDTIFVCYLEDLETNKDGNLYISPDLHELLQDKCNECKEKEQKNQSKV</sequence>
<feature type="chain" id="PRO_0000359735" description="CTL-like protein DDB_G0288717">
    <location>
        <begin position="1"/>
        <end position="548"/>
    </location>
</feature>
<feature type="transmembrane region" description="Helical" evidence="2">
    <location>
        <begin position="52"/>
        <end position="72"/>
    </location>
</feature>
<feature type="transmembrane region" description="Helical" evidence="2">
    <location>
        <begin position="125"/>
        <end position="145"/>
    </location>
</feature>
<feature type="transmembrane region" description="Helical" evidence="2">
    <location>
        <begin position="151"/>
        <end position="171"/>
    </location>
</feature>
<feature type="transmembrane region" description="Helical" evidence="2">
    <location>
        <begin position="184"/>
        <end position="204"/>
    </location>
</feature>
<feature type="transmembrane region" description="Helical" evidence="2">
    <location>
        <begin position="226"/>
        <end position="246"/>
    </location>
</feature>
<feature type="transmembrane region" description="Helical" evidence="2">
    <location>
        <begin position="290"/>
        <end position="310"/>
    </location>
</feature>
<feature type="transmembrane region" description="Helical" evidence="2">
    <location>
        <begin position="350"/>
        <end position="370"/>
    </location>
</feature>
<feature type="transmembrane region" description="Helical" evidence="2">
    <location>
        <begin position="381"/>
        <end position="401"/>
    </location>
</feature>
<feature type="transmembrane region" description="Helical" evidence="2">
    <location>
        <begin position="442"/>
        <end position="462"/>
    </location>
</feature>
<feature type="transmembrane region" description="Helical" evidence="2">
    <location>
        <begin position="479"/>
        <end position="499"/>
    </location>
</feature>
<feature type="region of interest" description="Disordered" evidence="3">
    <location>
        <begin position="1"/>
        <end position="44"/>
    </location>
</feature>
<feature type="glycosylation site" description="N-linked (GlcNAc...) asparagine" evidence="2">
    <location>
        <position position="25"/>
    </location>
</feature>
<feature type="glycosylation site" description="N-linked (GlcNAc...) asparagine" evidence="2">
    <location>
        <position position="97"/>
    </location>
</feature>
<feature type="glycosylation site" description="N-linked (GlcNAc...) asparagine" evidence="2">
    <location>
        <position position="273"/>
    </location>
</feature>
<feature type="glycosylation site" description="N-linked (GlcNAc...) asparagine" evidence="2">
    <location>
        <position position="377"/>
    </location>
</feature>
<feature type="glycosylation site" description="N-linked (GlcNAc...) asparagine" evidence="2">
    <location>
        <position position="544"/>
    </location>
</feature>
<gene>
    <name type="ORF">DDB_G0288717</name>
</gene>
<comment type="subcellular location">
    <subcellularLocation>
        <location evidence="1">Membrane</location>
        <topology evidence="1">Multi-pass membrane protein</topology>
    </subcellularLocation>
</comment>
<comment type="similarity">
    <text evidence="4">Belongs to the CTL (choline transporter-like) family.</text>
</comment>
<keyword id="KW-0325">Glycoprotein</keyword>
<keyword id="KW-0472">Membrane</keyword>
<keyword id="KW-1185">Reference proteome</keyword>
<keyword id="KW-0812">Transmembrane</keyword>
<keyword id="KW-1133">Transmembrane helix</keyword>
<organism>
    <name type="scientific">Dictyostelium discoideum</name>
    <name type="common">Social amoeba</name>
    <dbReference type="NCBI Taxonomy" id="44689"/>
    <lineage>
        <taxon>Eukaryota</taxon>
        <taxon>Amoebozoa</taxon>
        <taxon>Evosea</taxon>
        <taxon>Eumycetozoa</taxon>
        <taxon>Dictyostelia</taxon>
        <taxon>Dictyosteliales</taxon>
        <taxon>Dictyosteliaceae</taxon>
        <taxon>Dictyostelium</taxon>
    </lineage>
</organism>
<proteinExistence type="inferred from homology"/>